<sequence>MGKFLATLILFFQFCPLILGDYSPSCCTLTIGVSSYHSKPCNPAQPVCSWTLDLLALSADQALQPPCPNLVSYSSYHATYSLYLFPHWIKKPNRNGGGYYSASYSDPCSLKCPYLGCQSWTCPYTGAVSSPYWKFQQDVNFTQEVSRLNINLHFSKCGFPFSLLVDAPGYDPIWFLNTEPSQLPPTAPPLLPHSNLDHILEPSIPWKSKLLTLVQLTLQSTNYTCIVCIDRASLSTWHVLYSPNVSVPSSSSTPLLYPSLALPAPHLTLPFNWTHCFDPQIQAIVSSPCHNSLILPPFSLSPVPTLGSRSRRAVPVAVWLVSALAMGAGVAGGITGSMSLASGKSLLHEVDKDISQLTQAIVKNHKNLLKIAQYAAQNRRGLDLLFWEQGGLCKALQEQCCFLNITNSHVSILQERPPLENRVLTGWGLNWDLGLSQWAREALQTGITLVALLLLVILAGPCILRQLRHLPSRVRYPHYSLINPESSL</sequence>
<organism>
    <name type="scientific">Human T-cell leukemia virus 1 (strain Japan MT-2 subtype A)</name>
    <name type="common">HTLV-1</name>
    <dbReference type="NCBI Taxonomy" id="11928"/>
    <lineage>
        <taxon>Viruses</taxon>
        <taxon>Riboviria</taxon>
        <taxon>Pararnavirae</taxon>
        <taxon>Artverviricota</taxon>
        <taxon>Revtraviricetes</taxon>
        <taxon>Ortervirales</taxon>
        <taxon>Retroviridae</taxon>
        <taxon>Orthoretrovirinae</taxon>
        <taxon>Deltaretrovirus</taxon>
        <taxon>Primate T-lymphotropic virus 1</taxon>
    </lineage>
</organism>
<name>ENV_HTL1M</name>
<keyword id="KW-0165">Cleavage on pair of basic residues</keyword>
<keyword id="KW-0175">Coiled coil</keyword>
<keyword id="KW-1015">Disulfide bond</keyword>
<keyword id="KW-1169">Fusion of virus membrane with host cell membrane</keyword>
<keyword id="KW-1168">Fusion of virus membrane with host membrane</keyword>
<keyword id="KW-0325">Glycoprotein</keyword>
<keyword id="KW-1032">Host cell membrane</keyword>
<keyword id="KW-1043">Host membrane</keyword>
<keyword id="KW-0945">Host-virus interaction</keyword>
<keyword id="KW-0449">Lipoprotein</keyword>
<keyword id="KW-0472">Membrane</keyword>
<keyword id="KW-0564">Palmitate</keyword>
<keyword id="KW-0732">Signal</keyword>
<keyword id="KW-0812">Transmembrane</keyword>
<keyword id="KW-1133">Transmembrane helix</keyword>
<keyword id="KW-1161">Viral attachment to host cell</keyword>
<keyword id="KW-0261">Viral envelope protein</keyword>
<keyword id="KW-1162">Viral penetration into host cytoplasm</keyword>
<keyword id="KW-0946">Virion</keyword>
<keyword id="KW-1160">Virus entry into host cell</keyword>
<evidence type="ECO:0000250" key="1"/>
<evidence type="ECO:0000255" key="2"/>
<evidence type="ECO:0000269" key="3">
    <source>
    </source>
</evidence>
<evidence type="ECO:0000269" key="4">
    <source>
    </source>
</evidence>
<evidence type="ECO:0000305" key="5"/>
<organismHost>
    <name type="scientific">Homo sapiens</name>
    <name type="common">Human</name>
    <dbReference type="NCBI Taxonomy" id="9606"/>
</organismHost>
<comment type="function">
    <text evidence="1">The surface protein (SU) attaches the virus to the host cell by binding to its receptor. This interaction triggers the refolding of the transmembrane protein (TM) and is thought to activate its fusogenic potential by unmasking its fusion peptide. Fusion occurs at the host cell plasma membrane (By similarity).</text>
</comment>
<comment type="function">
    <text evidence="1">The transmembrane protein (TM) acts as a class I viral fusion protein. Under the current model, the protein has at least 3 conformational states: pre-fusion native state, pre-hairpin intermediate state, and post-fusion hairpin state. During viral and target cell membrane fusion, the coiled coil regions (heptad repeats) assume a trimer-of-hairpins structure, positioning the fusion peptide in close proximity to the C-terminal region of the ectodomain. The formation of this structure appears to drive apposition and subsequent fusion of viral and target cell membranes. Membranes fusion leads to delivery of the nucleocapsid into the cytoplasm (By similarity).</text>
</comment>
<comment type="subunit">
    <text evidence="1">The mature envelope protein (Env) consists of a trimer of SU-TM heterodimers attached by a labile interchain disulfide bond.</text>
</comment>
<comment type="subcellular location">
    <molecule>Transmembrane protein</molecule>
    <subcellularLocation>
        <location evidence="1">Virion membrane</location>
        <topology evidence="1">Single-pass type I membrane protein</topology>
    </subcellularLocation>
    <subcellularLocation>
        <location evidence="1">Host cell membrane</location>
        <topology evidence="1">Single-pass type I membrane protein</topology>
    </subcellularLocation>
    <text evidence="1">It is probably concentrated at the site of budding and incorporated into the virions possibly by contacts between the cytoplasmic tail of Env and the N-terminus of Gag.</text>
</comment>
<comment type="subcellular location">
    <molecule>Surface protein</molecule>
    <subcellularLocation>
        <location evidence="1">Virion membrane</location>
        <topology evidence="1">Peripheral membrane protein</topology>
    </subcellularLocation>
    <subcellularLocation>
        <location evidence="1">Host cell membrane</location>
        <topology evidence="1">Peripheral membrane protein</topology>
    </subcellularLocation>
    <text evidence="1">The surface protein is not anchored to the viral envelope, but associates with the extravirion surface through its binding to TM. It is probably concentrated at the site of budding and incorporated into the virions possibly by contacts between the cytoplasmic tail of Env and the N-terminus of Gag (By similarity).</text>
</comment>
<comment type="domain">
    <text>The glycine-rich region of transmembrane protein is involved in membrane fusion.</text>
</comment>
<comment type="domain">
    <text evidence="1">The 17 amino acids long immunosuppressive region is present in many retroviral envelope proteins. Synthetic peptides derived from this relatively conserved sequence inhibit immune function in vitro and in vivo (By similarity).</text>
</comment>
<comment type="PTM">
    <text evidence="1">Specific enzymatic cleavages in vivo yield mature proteins. Envelope glycoproteins are synthesized as an inactive precursor that is N-glycosylated and processed likely by host cell furin or by a furin-like protease in the Golgi to yield the mature SU and TM proteins. The cleavage site between SU and TM requires the minimal sequence [KR]-X-[KR]-R (By similarity).</text>
</comment>
<comment type="PTM">
    <text>The CXXC motif is highly conserved across a broad range of retroviral envelope proteins. It is thought to participate in the formation of a labile disulfide bond possibly with the CX6CC motif present in the transmembrane protein. Isomerization of the intersubunit disulfide bond to an SU intrachain disulfide bond is thought to occur upon receptor recognition in order to allow membrane fusion.</text>
</comment>
<comment type="PTM">
    <text evidence="1">The transmembrane protein is palmitoylated.</text>
</comment>
<comment type="miscellaneous">
    <text>HTLV-1 lineages are divided in four clades, A (Cosmopolitan), B (Central African group), C (Melanesian group) and D (New Central African group).</text>
</comment>
<accession>P23064</accession>
<dbReference type="EMBL" id="M37747">
    <property type="protein sequence ID" value="AAA46185.1"/>
    <property type="molecule type" value="Genomic_RNA"/>
</dbReference>
<dbReference type="EMBL" id="X56949">
    <property type="protein sequence ID" value="CAA40263.2"/>
    <property type="molecule type" value="Genomic_DNA"/>
</dbReference>
<dbReference type="PIR" id="A35323">
    <property type="entry name" value="VCLJMT"/>
</dbReference>
<dbReference type="PIR" id="S14605">
    <property type="entry name" value="S14605"/>
</dbReference>
<dbReference type="SMR" id="P23064"/>
<dbReference type="TCDB" id="1.G.9.2.3">
    <property type="family name" value="the syncytin (syncytin) family"/>
</dbReference>
<dbReference type="GlyCosmos" id="P23064">
    <property type="glycosylation" value="5 sites, No reported glycans"/>
</dbReference>
<dbReference type="GO" id="GO:0020002">
    <property type="term" value="C:host cell plasma membrane"/>
    <property type="evidence" value="ECO:0007669"/>
    <property type="project" value="UniProtKB-SubCell"/>
</dbReference>
<dbReference type="GO" id="GO:0016020">
    <property type="term" value="C:membrane"/>
    <property type="evidence" value="ECO:0007669"/>
    <property type="project" value="UniProtKB-KW"/>
</dbReference>
<dbReference type="GO" id="GO:0019031">
    <property type="term" value="C:viral envelope"/>
    <property type="evidence" value="ECO:0007669"/>
    <property type="project" value="UniProtKB-KW"/>
</dbReference>
<dbReference type="GO" id="GO:0055036">
    <property type="term" value="C:virion membrane"/>
    <property type="evidence" value="ECO:0007669"/>
    <property type="project" value="UniProtKB-SubCell"/>
</dbReference>
<dbReference type="GO" id="GO:0019064">
    <property type="term" value="P:fusion of virus membrane with host plasma membrane"/>
    <property type="evidence" value="ECO:0007669"/>
    <property type="project" value="UniProtKB-KW"/>
</dbReference>
<dbReference type="GO" id="GO:0046718">
    <property type="term" value="P:symbiont entry into host cell"/>
    <property type="evidence" value="ECO:0007669"/>
    <property type="project" value="UniProtKB-KW"/>
</dbReference>
<dbReference type="GO" id="GO:0019062">
    <property type="term" value="P:virion attachment to host cell"/>
    <property type="evidence" value="ECO:0007669"/>
    <property type="project" value="UniProtKB-KW"/>
</dbReference>
<dbReference type="CDD" id="cd09851">
    <property type="entry name" value="HTLV-1-like_HR1-HR2"/>
    <property type="match status" value="1"/>
</dbReference>
<dbReference type="Gene3D" id="1.10.287.210">
    <property type="match status" value="1"/>
</dbReference>
<dbReference type="InterPro" id="IPR018154">
    <property type="entry name" value="TLV/ENV_coat_polyprotein"/>
</dbReference>
<dbReference type="PANTHER" id="PTHR10424:SF81">
    <property type="entry name" value="ERVV2 PROTEIN"/>
    <property type="match status" value="1"/>
</dbReference>
<dbReference type="PANTHER" id="PTHR10424">
    <property type="entry name" value="VIRAL ENVELOPE PROTEIN"/>
    <property type="match status" value="1"/>
</dbReference>
<dbReference type="Pfam" id="PF00429">
    <property type="entry name" value="TLV_coat"/>
    <property type="match status" value="2"/>
</dbReference>
<dbReference type="SUPFAM" id="SSF58069">
    <property type="entry name" value="Virus ectodomain"/>
    <property type="match status" value="1"/>
</dbReference>
<feature type="signal peptide" evidence="2">
    <location>
        <begin position="1"/>
        <end position="20"/>
    </location>
</feature>
<feature type="chain" id="PRO_0000038755" description="Envelope glycoprotein gp62">
    <location>
        <begin position="21"/>
        <end position="488"/>
    </location>
</feature>
<feature type="chain" id="PRO_0000038756" description="Surface protein" evidence="1">
    <location>
        <begin position="21"/>
        <end position="312"/>
    </location>
</feature>
<feature type="chain" id="PRO_0000038757" description="Transmembrane protein" evidence="1">
    <location>
        <begin position="313"/>
        <end position="488"/>
    </location>
</feature>
<feature type="topological domain" description="Extracellular" evidence="2">
    <location>
        <begin position="21"/>
        <end position="442"/>
    </location>
</feature>
<feature type="transmembrane region" description="Helical" evidence="2">
    <location>
        <begin position="443"/>
        <end position="463"/>
    </location>
</feature>
<feature type="topological domain" description="Cytoplasmic" evidence="2">
    <location>
        <begin position="464"/>
        <end position="488"/>
    </location>
</feature>
<feature type="region of interest" description="Fusion peptide" evidence="2">
    <location>
        <begin position="313"/>
        <end position="333"/>
    </location>
</feature>
<feature type="region of interest" description="Gly-rich">
    <location>
        <begin position="327"/>
        <end position="339"/>
    </location>
</feature>
<feature type="region of interest" description="Immunosuppression" evidence="1">
    <location>
        <begin position="376"/>
        <end position="392"/>
    </location>
</feature>
<feature type="coiled-coil region">
    <location>
        <begin position="340"/>
        <end position="385"/>
    </location>
</feature>
<feature type="coiled-coil region" evidence="2">
    <location>
        <begin position="397"/>
        <end position="429"/>
    </location>
</feature>
<feature type="short sequence motif" description="CXXC">
    <location>
        <begin position="225"/>
        <end position="228"/>
    </location>
</feature>
<feature type="short sequence motif" description="CX6CC">
    <location>
        <begin position="393"/>
        <end position="401"/>
    </location>
</feature>
<feature type="site" description="Cleavage; by host furin" evidence="1">
    <location>
        <begin position="312"/>
        <end position="313"/>
    </location>
</feature>
<feature type="lipid moiety-binding region" description="S-palmitoyl cysteine; by host" evidence="1">
    <location>
        <position position="462"/>
    </location>
</feature>
<feature type="glycosylation site" description="N-linked (GlcNAc...) asparagine; by host" evidence="2">
    <location>
        <position position="140"/>
    </location>
</feature>
<feature type="glycosylation site" description="N-linked (GlcNAc...) asparagine; by host" evidence="2">
    <location>
        <position position="222"/>
    </location>
</feature>
<feature type="glycosylation site" description="N-linked (GlcNAc...) asparagine; by host" evidence="2">
    <location>
        <position position="244"/>
    </location>
</feature>
<feature type="glycosylation site" description="N-linked (GlcNAc...) asparagine; by host" evidence="2">
    <location>
        <position position="272"/>
    </location>
</feature>
<feature type="glycosylation site" description="N-linked (GlcNAc...) asparagine; by host" evidence="2">
    <location>
        <position position="404"/>
    </location>
</feature>
<feature type="disulfide bond" description="Interchain (between SU and TM chains, or C-228 with C-401); in linked form" evidence="3">
    <location>
        <begin position="225"/>
        <end position="401"/>
    </location>
</feature>
<feature type="disulfide bond" evidence="3">
    <location>
        <begin position="225"/>
        <end position="228"/>
    </location>
</feature>
<feature type="disulfide bond" evidence="1">
    <location>
        <begin position="393"/>
        <end position="400"/>
    </location>
</feature>
<feature type="mutagenesis site" description="10% loss of transmembrane protein cell-cell fusion activity." evidence="4">
    <original>G</original>
    <variation>A</variation>
    <location>
        <position position="327"/>
    </location>
</feature>
<feature type="mutagenesis site" description="85% loss of transmembrane protein cell-cell fusion activity." evidence="4">
    <original>G</original>
    <variation>P</variation>
    <location>
        <position position="327"/>
    </location>
</feature>
<feature type="mutagenesis site" description="25% loss of transmembrane protein cell-cell fusion activity." evidence="4">
    <original>G</original>
    <variation>A</variation>
    <location>
        <position position="329"/>
    </location>
</feature>
<feature type="mutagenesis site" description="80% loss of transmembrane protein cell-cell fusion activity." evidence="4">
    <original>G</original>
    <variation>P</variation>
    <location>
        <position position="329"/>
    </location>
</feature>
<feature type="mutagenesis site" description="30% loss of transmembrane protein cell-cell fusion activity." evidence="4">
    <original>V</original>
    <variation>A</variation>
    <location>
        <position position="330"/>
    </location>
</feature>
<feature type="mutagenesis site" description="40% loss of transmembrane protein cell-cell fusion activity." evidence="4">
    <original>G</original>
    <variation>A</variation>
    <location>
        <position position="332"/>
    </location>
</feature>
<feature type="mutagenesis site" description="85% loss of transmembrane protein cell-cell fusion activity." evidence="4">
    <original>G</original>
    <variation>P</variation>
    <location>
        <position position="332"/>
    </location>
</feature>
<feature type="mutagenesis site" description="85% loss of transmembrane protein cell-cell fusion activity." evidence="4">
    <original>G</original>
    <variation>P</variation>
    <location>
        <position position="333"/>
    </location>
</feature>
<feature type="mutagenesis site" description="90% loss of transmembrane protein cell-cell fusion activity." evidence="4">
    <original>I</original>
    <variation>A</variation>
    <location>
        <position position="334"/>
    </location>
</feature>
<feature type="mutagenesis site" description="85% loss of transmembrane protein cell-cell fusion activity." evidence="4">
    <original>G</original>
    <variation>P</variation>
    <location>
        <position position="336"/>
    </location>
</feature>
<feature type="sequence conflict" description="In Ref. 2." evidence="5" ref="2">
    <original>A</original>
    <variation>P</variation>
    <location>
        <position position="341"/>
    </location>
</feature>
<protein>
    <recommendedName>
        <fullName>Envelope glycoprotein gp62</fullName>
    </recommendedName>
    <alternativeName>
        <fullName>Env polyprotein</fullName>
    </alternativeName>
    <component>
        <recommendedName>
            <fullName>Surface protein</fullName>
            <shortName>SU</shortName>
        </recommendedName>
        <alternativeName>
            <fullName>Glycoprotein 46</fullName>
            <shortName>gp46</shortName>
        </alternativeName>
    </component>
    <component>
        <recommendedName>
            <fullName>Transmembrane protein</fullName>
            <shortName>TM</shortName>
        </recommendedName>
        <alternativeName>
            <fullName>Glycoprotein 21</fullName>
            <shortName>gp21</shortName>
        </alternativeName>
    </component>
</protein>
<proteinExistence type="evidence at protein level"/>
<gene>
    <name type="primary">env</name>
</gene>
<reference key="1">
    <citation type="journal article" date="1990" name="Virology">
        <title>Envelope gene sequence of HTLV-1 isolate MT-2 and its comparison with other HTLV-1 isolates.</title>
        <authorList>
            <person name="Gray G.S."/>
            <person name="White M."/>
            <person name="Bartman T."/>
            <person name="Mann D."/>
        </authorList>
    </citation>
    <scope>NUCLEOTIDE SEQUENCE [GENOMIC RNA]</scope>
</reference>
<reference key="2">
    <citation type="submission" date="1990-12" db="EMBL/GenBank/DDBJ databases">
        <authorList>
            <person name="Astier-Gin T."/>
            <person name="Guillemain B."/>
        </authorList>
    </citation>
    <scope>NUCLEOTIDE SEQUENCE [GENOMIC DNA]</scope>
</reference>
<reference key="3">
    <citation type="journal article" date="2004" name="EMBO J.">
        <title>Isomerization of the intersubunit disulphide-bond in Env controls retrovirus fusion.</title>
        <authorList>
            <person name="Wallin M."/>
            <person name="Ekstroem M."/>
            <person name="Garoff H."/>
        </authorList>
    </citation>
    <scope>INTERCHAIN DISULFIDE BOND</scope>
</reference>
<reference key="4">
    <citation type="journal article" date="2005" name="J. Virol.">
        <title>The conserved glycine-rich segment linking the N-terminal fusion peptide to the coiled coil of human T-cell leukemia virus type 1 transmembrane glycoprotein gp21 is a determinant of membrane fusion function.</title>
        <authorList>
            <person name="Wilson K.A."/>
            <person name="Baer S."/>
            <person name="Maerz A.L."/>
            <person name="Alizon M."/>
            <person name="Poumbourios P."/>
        </authorList>
    </citation>
    <scope>FUNCTION OF THE GLYCINE-RICH REGION</scope>
    <scope>MUTAGENESIS OF GLY-327; GLY-329; VAL-330; GLY-332; GLY-333; ILE-334 AND GLY-336</scope>
</reference>
<reference key="5">
    <citation type="journal article" date="1999" name="Proc. Natl. Acad. Sci. U.S.A.">
        <title>Crystal structure of human T cell leukemia virus type 1 gp21 ectodomain crystallized as a maltose-binding protein chimera reveals structural evolution of retroviral transmembrane proteins.</title>
        <authorList>
            <person name="Kobe B."/>
            <person name="Center R.J."/>
            <person name="Kemp B.E."/>
            <person name="Poumbourios P."/>
        </authorList>
    </citation>
    <scope>X-RAY CRYSTALLOGRAPHY (2.5 ANGSTROMS) OF 338-425</scope>
    <scope>DISULFIDE BOND</scope>
</reference>